<dbReference type="EC" id="2.1.1.104"/>
<dbReference type="EMBL" id="AB035144">
    <property type="protein sequence ID" value="BAA88234.1"/>
    <property type="molecule type" value="Genomic_DNA"/>
</dbReference>
<dbReference type="SMR" id="Q9SLP8"/>
<dbReference type="UniPathway" id="UPA00711"/>
<dbReference type="GO" id="GO:0042409">
    <property type="term" value="F:caffeoyl-CoA O-methyltransferase activity"/>
    <property type="evidence" value="ECO:0007669"/>
    <property type="project" value="UniProtKB-EC"/>
</dbReference>
<dbReference type="GO" id="GO:0046872">
    <property type="term" value="F:metal ion binding"/>
    <property type="evidence" value="ECO:0007669"/>
    <property type="project" value="UniProtKB-KW"/>
</dbReference>
<dbReference type="GO" id="GO:0009809">
    <property type="term" value="P:lignin biosynthetic process"/>
    <property type="evidence" value="ECO:0007669"/>
    <property type="project" value="UniProtKB-KW"/>
</dbReference>
<dbReference type="GO" id="GO:0032259">
    <property type="term" value="P:methylation"/>
    <property type="evidence" value="ECO:0007669"/>
    <property type="project" value="UniProtKB-KW"/>
</dbReference>
<dbReference type="CDD" id="cd02440">
    <property type="entry name" value="AdoMet_MTases"/>
    <property type="match status" value="1"/>
</dbReference>
<dbReference type="FunFam" id="3.40.50.150:FF:000147">
    <property type="entry name" value="Caffeoyl-CoA O-methyltransferase 1"/>
    <property type="match status" value="1"/>
</dbReference>
<dbReference type="Gene3D" id="3.40.50.150">
    <property type="entry name" value="Vaccinia Virus protein VP39"/>
    <property type="match status" value="1"/>
</dbReference>
<dbReference type="InterPro" id="IPR050362">
    <property type="entry name" value="Cation-dep_OMT"/>
</dbReference>
<dbReference type="InterPro" id="IPR029063">
    <property type="entry name" value="SAM-dependent_MTases_sf"/>
</dbReference>
<dbReference type="InterPro" id="IPR002935">
    <property type="entry name" value="SAM_O-MeTrfase"/>
</dbReference>
<dbReference type="PANTHER" id="PTHR10509:SF97">
    <property type="entry name" value="CAFFEOYL-COA O-METHYLTRANSFERASE 5"/>
    <property type="match status" value="1"/>
</dbReference>
<dbReference type="PANTHER" id="PTHR10509">
    <property type="entry name" value="O-METHYLTRANSFERASE-RELATED"/>
    <property type="match status" value="1"/>
</dbReference>
<dbReference type="Pfam" id="PF01596">
    <property type="entry name" value="Methyltransf_3"/>
    <property type="match status" value="1"/>
</dbReference>
<dbReference type="SUPFAM" id="SSF53335">
    <property type="entry name" value="S-adenosyl-L-methionine-dependent methyltransferases"/>
    <property type="match status" value="1"/>
</dbReference>
<dbReference type="PROSITE" id="PS51682">
    <property type="entry name" value="SAM_OMT_I"/>
    <property type="match status" value="1"/>
</dbReference>
<reference key="1">
    <citation type="submission" date="1999-11" db="EMBL/GenBank/DDBJ databases">
        <title>Cloning of a genomic DNA encoding caffeoyl-CoenzymeA 3-O-methyltransferase of citrus.</title>
        <authorList>
            <person name="Gryciuk A.A."/>
            <person name="Tsuyumu S."/>
        </authorList>
    </citation>
    <scope>NUCLEOTIDE SEQUENCE [GENOMIC DNA]</scope>
</reference>
<comment type="function">
    <text>Methylates caffeoyl-CoA to feruloyl-CoA and 5-hydroxyferuloyl-CoA to sinapoyl-CoA. Plays a role in the synthesis of feruloylated polysaccharides. Involved in the reinforcement of the plant cell wall. Also involved in the responding to wounding or pathogen challenge by the increased formation of cell wall-bound ferulic acid polymers.</text>
</comment>
<comment type="catalytic activity">
    <reaction>
        <text>(E)-caffeoyl-CoA + S-adenosyl-L-methionine = (E)-feruloyl-CoA + S-adenosyl-L-homocysteine + H(+)</text>
        <dbReference type="Rhea" id="RHEA:16925"/>
        <dbReference type="ChEBI" id="CHEBI:15378"/>
        <dbReference type="ChEBI" id="CHEBI:57856"/>
        <dbReference type="ChEBI" id="CHEBI:59789"/>
        <dbReference type="ChEBI" id="CHEBI:87136"/>
        <dbReference type="ChEBI" id="CHEBI:87305"/>
        <dbReference type="EC" id="2.1.1.104"/>
    </reaction>
</comment>
<comment type="cofactor">
    <cofactor evidence="1">
        <name>a divalent metal cation</name>
        <dbReference type="ChEBI" id="CHEBI:60240"/>
    </cofactor>
    <text evidence="1">Binds 1 divalent metal cation per subunit.</text>
</comment>
<comment type="pathway">
    <text>Aromatic compound metabolism; phenylpropanoid biosynthesis.</text>
</comment>
<comment type="similarity">
    <text evidence="2">Belongs to the class I-like SAM-binding methyltransferase superfamily. Cation-dependent O-methyltransferase family. CCoAMT subfamily.</text>
</comment>
<proteinExistence type="inferred from homology"/>
<accession>Q9SLP8</accession>
<keyword id="KW-0438">Lignin biosynthesis</keyword>
<keyword id="KW-0479">Metal-binding</keyword>
<keyword id="KW-0489">Methyltransferase</keyword>
<keyword id="KW-0949">S-adenosyl-L-methionine</keyword>
<keyword id="KW-0808">Transferase</keyword>
<organism>
    <name type="scientific">Citrus natsudaidai</name>
    <name type="common">Natsudaidai orange</name>
    <name type="synonym">Japanese summer orange</name>
    <dbReference type="NCBI Taxonomy" id="109792"/>
    <lineage>
        <taxon>Eukaryota</taxon>
        <taxon>Viridiplantae</taxon>
        <taxon>Streptophyta</taxon>
        <taxon>Embryophyta</taxon>
        <taxon>Tracheophyta</taxon>
        <taxon>Spermatophyta</taxon>
        <taxon>Magnoliopsida</taxon>
        <taxon>eudicotyledons</taxon>
        <taxon>Gunneridae</taxon>
        <taxon>Pentapetalae</taxon>
        <taxon>rosids</taxon>
        <taxon>malvids</taxon>
        <taxon>Sapindales</taxon>
        <taxon>Rutaceae</taxon>
        <taxon>Aurantioideae</taxon>
        <taxon>Citrus</taxon>
    </lineage>
</organism>
<name>CAMT_CITNA</name>
<protein>
    <recommendedName>
        <fullName>Caffeoyl-CoA O-methyltransferase</fullName>
        <ecNumber>2.1.1.104</ecNumber>
    </recommendedName>
    <alternativeName>
        <fullName>Trans-caffeoyl-CoA 3-O-methyltransferase</fullName>
        <shortName>CCoAMT</shortName>
        <shortName>CCoAOMT</shortName>
    </alternativeName>
</protein>
<evidence type="ECO:0000250" key="1">
    <source>
        <dbReference type="UniProtKB" id="Q40313"/>
    </source>
</evidence>
<evidence type="ECO:0000255" key="2">
    <source>
        <dbReference type="PROSITE-ProRule" id="PRU01019"/>
    </source>
</evidence>
<sequence>MAKGHKSKLQSDALRQYILETSVYPREPESMKELREVTAKHPWNLMRTSADEGQFLNMSLKLINAKNTMEIGVYTDYSLLATALAIPDDGKILAMDINRENYEIGLPKIEKAGVAHRIQFREGPALPVLDQLVEDKKNHGTYDFIFVDADKDNYINYHKRIIDLVKVGGLIGYDNTLWNGSVVGPPDAPMRKYLRYCRDFVLELIKALAVDPRIEICMLPVGDGITLSRRIT</sequence>
<feature type="chain" id="PRO_0000165680" description="Caffeoyl-CoA O-methyltransferase">
    <location>
        <begin position="1"/>
        <end position="232"/>
    </location>
</feature>
<feature type="binding site" evidence="1">
    <location>
        <position position="6"/>
    </location>
    <ligand>
        <name>substrate</name>
    </ligand>
</feature>
<feature type="binding site" evidence="2">
    <location>
        <position position="48"/>
    </location>
    <ligand>
        <name>S-adenosyl-L-methionine</name>
        <dbReference type="ChEBI" id="CHEBI:59789"/>
    </ligand>
</feature>
<feature type="binding site" evidence="2">
    <location>
        <position position="70"/>
    </location>
    <ligand>
        <name>S-adenosyl-L-methionine</name>
        <dbReference type="ChEBI" id="CHEBI:59789"/>
    </ligand>
</feature>
<feature type="binding site" evidence="2">
    <location>
        <begin position="72"/>
        <end position="73"/>
    </location>
    <ligand>
        <name>S-adenosyl-L-methionine</name>
        <dbReference type="ChEBI" id="CHEBI:59789"/>
    </ligand>
</feature>
<feature type="binding site" evidence="2">
    <location>
        <position position="78"/>
    </location>
    <ligand>
        <name>S-adenosyl-L-methionine</name>
        <dbReference type="ChEBI" id="CHEBI:59789"/>
    </ligand>
</feature>
<feature type="binding site" evidence="2">
    <location>
        <position position="96"/>
    </location>
    <ligand>
        <name>S-adenosyl-L-methionine</name>
        <dbReference type="ChEBI" id="CHEBI:59789"/>
    </ligand>
</feature>
<feature type="binding site" evidence="2">
    <location>
        <position position="125"/>
    </location>
    <ligand>
        <name>S-adenosyl-L-methionine</name>
        <dbReference type="ChEBI" id="CHEBI:59789"/>
    </ligand>
</feature>
<feature type="binding site" evidence="2">
    <location>
        <position position="148"/>
    </location>
    <ligand>
        <name>a divalent metal cation</name>
        <dbReference type="ChEBI" id="CHEBI:60240"/>
    </ligand>
</feature>
<feature type="binding site" evidence="1">
    <location>
        <position position="148"/>
    </location>
    <ligand>
        <name>substrate</name>
    </ligand>
</feature>
<feature type="binding site" evidence="2">
    <location>
        <position position="150"/>
    </location>
    <ligand>
        <name>S-adenosyl-L-methionine</name>
        <dbReference type="ChEBI" id="CHEBI:59789"/>
    </ligand>
</feature>
<feature type="binding site" evidence="2">
    <location>
        <position position="174"/>
    </location>
    <ligand>
        <name>a divalent metal cation</name>
        <dbReference type="ChEBI" id="CHEBI:60240"/>
    </ligand>
</feature>
<feature type="binding site" evidence="2">
    <location>
        <position position="175"/>
    </location>
    <ligand>
        <name>a divalent metal cation</name>
        <dbReference type="ChEBI" id="CHEBI:60240"/>
    </ligand>
</feature>
<feature type="binding site" evidence="1">
    <location>
        <position position="179"/>
    </location>
    <ligand>
        <name>substrate</name>
    </ligand>
</feature>